<proteinExistence type="inferred from homology"/>
<name>PGCA_STAA3</name>
<evidence type="ECO:0000250" key="1"/>
<evidence type="ECO:0000305" key="2"/>
<organism>
    <name type="scientific">Staphylococcus aureus (strain USA300)</name>
    <dbReference type="NCBI Taxonomy" id="367830"/>
    <lineage>
        <taxon>Bacteria</taxon>
        <taxon>Bacillati</taxon>
        <taxon>Bacillota</taxon>
        <taxon>Bacilli</taxon>
        <taxon>Bacillales</taxon>
        <taxon>Staphylococcaceae</taxon>
        <taxon>Staphylococcus</taxon>
    </lineage>
</organism>
<reference key="1">
    <citation type="journal article" date="2006" name="Lancet">
        <title>Complete genome sequence of USA300, an epidemic clone of community-acquired meticillin-resistant Staphylococcus aureus.</title>
        <authorList>
            <person name="Diep B.A."/>
            <person name="Gill S.R."/>
            <person name="Chang R.F."/>
            <person name="Phan T.H."/>
            <person name="Chen J.H."/>
            <person name="Davidson M.G."/>
            <person name="Lin F."/>
            <person name="Lin J."/>
            <person name="Carleton H.A."/>
            <person name="Mongodin E.F."/>
            <person name="Sensabaugh G.F."/>
            <person name="Perdreau-Remington F."/>
        </authorList>
    </citation>
    <scope>NUCLEOTIDE SEQUENCE [LARGE SCALE GENOMIC DNA]</scope>
    <source>
        <strain>USA300</strain>
    </source>
</reference>
<sequence length="552" mass="62377">MKGCLATMDKELWIERANDSLVKHFYEQQSDIEQREGFESKLTFGTAGIRGKFGLGEGRLNKFTIEKLALGLARYLNAQTNSPTIVIHYDIRHLSTEFAQIIANVLANHQITVYLPDTYKTTPELSFAVRNLNTTAGIMITASHNPKDYNGIKVYGSDGAQLSTDASELASRYIEEVGDPLQIDIPISKQNTSYIKPFPKSVTDDYMKHIQNMIGYIPKSDLQVVFTSLHGTSVPIVPELLQSLNFNQFNLVEAQCKPDPNFSSVQSANPEDHRAFDQAVELANKSHADLLISTDPDADRLGIAERDAHGHITYFNGNQIGALLLNYRIQQTSQLRHRLMIQSIVSSELTKSLARYNNVEYKEVLTGFKFIAQEIRQLDDHQNMIFAFEESYGFLSEPFVRDKDAVQIVPLIIKYASELKLYGKTLKDELEQIYQTVGRHEDTLFSHTLEGFEGKKKINAIMTKFRSNPPQEIQGLKVKAIEDYLTSEVYHLDKDTTSQINSPKSNVIRVLFDEGFIALRPSGTEPKIKLYVSLKCPNFDDVAQKINAMIFS</sequence>
<gene>
    <name type="primary">pgcA</name>
    <name type="ordered locus">SAUSA300_2433</name>
</gene>
<accession>Q2FE11</accession>
<dbReference type="EC" id="5.4.2.2"/>
<dbReference type="EMBL" id="CP000255">
    <property type="protein sequence ID" value="ABD20542.1"/>
    <property type="status" value="ALT_INIT"/>
    <property type="molecule type" value="Genomic_DNA"/>
</dbReference>
<dbReference type="SMR" id="Q2FE11"/>
<dbReference type="KEGG" id="saa:SAUSA300_2433"/>
<dbReference type="HOGENOM" id="CLU_016950_0_0_9"/>
<dbReference type="UniPathway" id="UPA00894"/>
<dbReference type="Proteomes" id="UP000001939">
    <property type="component" value="Chromosome"/>
</dbReference>
<dbReference type="GO" id="GO:0000287">
    <property type="term" value="F:magnesium ion binding"/>
    <property type="evidence" value="ECO:0007669"/>
    <property type="project" value="InterPro"/>
</dbReference>
<dbReference type="GO" id="GO:0004614">
    <property type="term" value="F:phosphoglucomutase activity"/>
    <property type="evidence" value="ECO:0007669"/>
    <property type="project" value="UniProtKB-EC"/>
</dbReference>
<dbReference type="GO" id="GO:0008973">
    <property type="term" value="F:phosphopentomutase activity"/>
    <property type="evidence" value="ECO:0007669"/>
    <property type="project" value="TreeGrafter"/>
</dbReference>
<dbReference type="GO" id="GO:0009246">
    <property type="term" value="P:enterobacterial common antigen biosynthetic process"/>
    <property type="evidence" value="ECO:0007669"/>
    <property type="project" value="UniProtKB-UniPathway"/>
</dbReference>
<dbReference type="GO" id="GO:0006006">
    <property type="term" value="P:glucose metabolic process"/>
    <property type="evidence" value="ECO:0007669"/>
    <property type="project" value="UniProtKB-KW"/>
</dbReference>
<dbReference type="GO" id="GO:0006166">
    <property type="term" value="P:purine ribonucleoside salvage"/>
    <property type="evidence" value="ECO:0007669"/>
    <property type="project" value="TreeGrafter"/>
</dbReference>
<dbReference type="CDD" id="cd05799">
    <property type="entry name" value="PGM2"/>
    <property type="match status" value="1"/>
</dbReference>
<dbReference type="Gene3D" id="3.40.120.10">
    <property type="entry name" value="Alpha-D-Glucose-1,6-Bisphosphate, subunit A, domain 3"/>
    <property type="match status" value="3"/>
</dbReference>
<dbReference type="Gene3D" id="3.30.310.50">
    <property type="entry name" value="Alpha-D-phosphohexomutase, C-terminal domain"/>
    <property type="match status" value="1"/>
</dbReference>
<dbReference type="InterPro" id="IPR005844">
    <property type="entry name" value="A-D-PHexomutase_a/b/a-I"/>
</dbReference>
<dbReference type="InterPro" id="IPR016055">
    <property type="entry name" value="A-D-PHexomutase_a/b/a-I/II/III"/>
</dbReference>
<dbReference type="InterPro" id="IPR005845">
    <property type="entry name" value="A-D-PHexomutase_a/b/a-II"/>
</dbReference>
<dbReference type="InterPro" id="IPR005846">
    <property type="entry name" value="A-D-PHexomutase_a/b/a-III"/>
</dbReference>
<dbReference type="InterPro" id="IPR005843">
    <property type="entry name" value="A-D-PHexomutase_C"/>
</dbReference>
<dbReference type="InterPro" id="IPR036900">
    <property type="entry name" value="A-D-PHexomutase_C_sf"/>
</dbReference>
<dbReference type="InterPro" id="IPR016066">
    <property type="entry name" value="A-D-PHexomutase_CS"/>
</dbReference>
<dbReference type="InterPro" id="IPR005841">
    <property type="entry name" value="Alpha-D-phosphohexomutase_SF"/>
</dbReference>
<dbReference type="PANTHER" id="PTHR45745:SF1">
    <property type="entry name" value="PHOSPHOGLUCOMUTASE 2B-RELATED"/>
    <property type="match status" value="1"/>
</dbReference>
<dbReference type="PANTHER" id="PTHR45745">
    <property type="entry name" value="PHOSPHOMANNOMUTASE 45A"/>
    <property type="match status" value="1"/>
</dbReference>
<dbReference type="Pfam" id="PF02878">
    <property type="entry name" value="PGM_PMM_I"/>
    <property type="match status" value="1"/>
</dbReference>
<dbReference type="Pfam" id="PF02879">
    <property type="entry name" value="PGM_PMM_II"/>
    <property type="match status" value="1"/>
</dbReference>
<dbReference type="Pfam" id="PF02880">
    <property type="entry name" value="PGM_PMM_III"/>
    <property type="match status" value="1"/>
</dbReference>
<dbReference type="Pfam" id="PF00408">
    <property type="entry name" value="PGM_PMM_IV"/>
    <property type="match status" value="1"/>
</dbReference>
<dbReference type="PRINTS" id="PR00509">
    <property type="entry name" value="PGMPMM"/>
</dbReference>
<dbReference type="SUPFAM" id="SSF55957">
    <property type="entry name" value="Phosphoglucomutase, C-terminal domain"/>
    <property type="match status" value="1"/>
</dbReference>
<dbReference type="SUPFAM" id="SSF53738">
    <property type="entry name" value="Phosphoglucomutase, first 3 domains"/>
    <property type="match status" value="3"/>
</dbReference>
<dbReference type="PROSITE" id="PS00710">
    <property type="entry name" value="PGM_PMM"/>
    <property type="match status" value="1"/>
</dbReference>
<feature type="chain" id="PRO_0000308337" description="Phosphoglucomutase">
    <location>
        <begin position="1"/>
        <end position="552"/>
    </location>
</feature>
<feature type="active site" description="Phosphoserine intermediate" evidence="1">
    <location>
        <position position="143"/>
    </location>
</feature>
<feature type="binding site" description="via phosphate group" evidence="1">
    <location>
        <position position="143"/>
    </location>
    <ligand>
        <name>Mg(2+)</name>
        <dbReference type="ChEBI" id="CHEBI:18420"/>
    </ligand>
</feature>
<feature type="binding site" evidence="1">
    <location>
        <position position="295"/>
    </location>
    <ligand>
        <name>Mg(2+)</name>
        <dbReference type="ChEBI" id="CHEBI:18420"/>
    </ligand>
</feature>
<feature type="binding site" evidence="1">
    <location>
        <position position="297"/>
    </location>
    <ligand>
        <name>Mg(2+)</name>
        <dbReference type="ChEBI" id="CHEBI:18420"/>
    </ligand>
</feature>
<feature type="binding site" evidence="1">
    <location>
        <position position="299"/>
    </location>
    <ligand>
        <name>Mg(2+)</name>
        <dbReference type="ChEBI" id="CHEBI:18420"/>
    </ligand>
</feature>
<comment type="function">
    <text evidence="1">Catalyzes the interconversion between glucose-6-phosphate and alpha-glucose-1-phosphate. This is the first step in the biosynthesis of diglucosyl-diacylglycerol (Glc2-DAG), i.e. the predominant glycolipid found in the S.aureus membrane, which is also used as a membrane anchor for lipoteichoic acid (LTA) (By similarity).</text>
</comment>
<comment type="catalytic activity">
    <reaction>
        <text>alpha-D-glucose 1-phosphate = alpha-D-glucose 6-phosphate</text>
        <dbReference type="Rhea" id="RHEA:23536"/>
        <dbReference type="ChEBI" id="CHEBI:58225"/>
        <dbReference type="ChEBI" id="CHEBI:58601"/>
        <dbReference type="EC" id="5.4.2.2"/>
    </reaction>
</comment>
<comment type="cofactor">
    <cofactor evidence="1">
        <name>Mg(2+)</name>
        <dbReference type="ChEBI" id="CHEBI:18420"/>
    </cofactor>
    <text evidence="1">Binds 1 Mg(2+) ion per subunit.</text>
</comment>
<comment type="pathway">
    <text>Glycolipid metabolism; diglucosyl-diacylglycerol biosynthesis.</text>
</comment>
<comment type="similarity">
    <text evidence="2">Belongs to the phosphohexose mutase family.</text>
</comment>
<comment type="sequence caution" evidence="2">
    <conflict type="erroneous initiation">
        <sequence resource="EMBL-CDS" id="ABD20542"/>
    </conflict>
</comment>
<keyword id="KW-0119">Carbohydrate metabolism</keyword>
<keyword id="KW-0313">Glucose metabolism</keyword>
<keyword id="KW-0413">Isomerase</keyword>
<keyword id="KW-0460">Magnesium</keyword>
<keyword id="KW-0479">Metal-binding</keyword>
<keyword id="KW-0597">Phosphoprotein</keyword>
<protein>
    <recommendedName>
        <fullName>Phosphoglucomutase</fullName>
        <shortName>PGM</shortName>
        <ecNumber>5.4.2.2</ecNumber>
    </recommendedName>
    <alternativeName>
        <fullName>Alpha-phosphoglucomutase</fullName>
    </alternativeName>
    <alternativeName>
        <fullName>Glucose phosphomutase</fullName>
    </alternativeName>
</protein>